<name>ECFA2_LACPL</name>
<gene>
    <name evidence="1" type="primary">ecfA2</name>
    <name type="synonym">cbiO2</name>
    <name type="ordered locus">lp_1074</name>
</gene>
<sequence length="295" mass="32302">MAITFKQVDFTYQPGTPFETKALTDINVTIPTGSYTALIGHTGSGKSTLLQHLNALLKPTSGTVTIGERVITPTTSNKDLKRLRQHVGIVFQFPESQLFEETVAKDIAFGPQNFGASEADALKTAAEMLALVGLDESLLTRSPFDLSGGQMRRVAIAGVLAMQPQVLVLDEPTAGLDPQGRLDMMEMFARLRHERDLTVVLVTHQMDDVANYADNVIVMDRGQIVKTGTPREIFKDPAWLTAHQLGLPKTTAFAHTLQKQGWQFNEWPLTEDELAAAIVQQLPPNAMGEVAAHDE</sequence>
<evidence type="ECO:0000255" key="1">
    <source>
        <dbReference type="HAMAP-Rule" id="MF_01710"/>
    </source>
</evidence>
<organism>
    <name type="scientific">Lactiplantibacillus plantarum (strain ATCC BAA-793 / NCIMB 8826 / WCFS1)</name>
    <name type="common">Lactobacillus plantarum</name>
    <dbReference type="NCBI Taxonomy" id="220668"/>
    <lineage>
        <taxon>Bacteria</taxon>
        <taxon>Bacillati</taxon>
        <taxon>Bacillota</taxon>
        <taxon>Bacilli</taxon>
        <taxon>Lactobacillales</taxon>
        <taxon>Lactobacillaceae</taxon>
        <taxon>Lactiplantibacillus</taxon>
    </lineage>
</organism>
<comment type="function">
    <text evidence="1">ATP-binding (A) component of a common energy-coupling factor (ECF) ABC-transporter complex. Unlike classic ABC transporters this ECF transporter provides the energy necessary to transport a number of different substrates.</text>
</comment>
<comment type="subunit">
    <text evidence="1">Forms a stable energy-coupling factor (ECF) transporter complex composed of 2 membrane-embedded substrate-binding proteins (S component), 2 ATP-binding proteins (A component) and 2 transmembrane proteins (T component).</text>
</comment>
<comment type="subcellular location">
    <subcellularLocation>
        <location evidence="1">Cell membrane</location>
        <topology evidence="1">Peripheral membrane protein</topology>
    </subcellularLocation>
</comment>
<comment type="similarity">
    <text evidence="1">Belongs to the ABC transporter superfamily. Energy-coupling factor EcfA family.</text>
</comment>
<feature type="chain" id="PRO_0000092022" description="Energy-coupling factor transporter ATP-binding protein EcfA2">
    <location>
        <begin position="1"/>
        <end position="295"/>
    </location>
</feature>
<feature type="domain" description="ABC transporter" evidence="1">
    <location>
        <begin position="3"/>
        <end position="246"/>
    </location>
</feature>
<feature type="binding site" evidence="1">
    <location>
        <begin position="40"/>
        <end position="47"/>
    </location>
    <ligand>
        <name>ATP</name>
        <dbReference type="ChEBI" id="CHEBI:30616"/>
    </ligand>
</feature>
<accession>Q88XV1</accession>
<accession>F9UMP1</accession>
<keyword id="KW-0067">ATP-binding</keyword>
<keyword id="KW-1003">Cell membrane</keyword>
<keyword id="KW-0472">Membrane</keyword>
<keyword id="KW-0547">Nucleotide-binding</keyword>
<keyword id="KW-1185">Reference proteome</keyword>
<keyword id="KW-1278">Translocase</keyword>
<keyword id="KW-0813">Transport</keyword>
<reference key="1">
    <citation type="journal article" date="2003" name="Proc. Natl. Acad. Sci. U.S.A.">
        <title>Complete genome sequence of Lactobacillus plantarum WCFS1.</title>
        <authorList>
            <person name="Kleerebezem M."/>
            <person name="Boekhorst J."/>
            <person name="van Kranenburg R."/>
            <person name="Molenaar D."/>
            <person name="Kuipers O.P."/>
            <person name="Leer R."/>
            <person name="Tarchini R."/>
            <person name="Peters S.A."/>
            <person name="Sandbrink H.M."/>
            <person name="Fiers M.W.E.J."/>
            <person name="Stiekema W."/>
            <person name="Klein Lankhorst R.M."/>
            <person name="Bron P.A."/>
            <person name="Hoffer S.M."/>
            <person name="Nierop Groot M.N."/>
            <person name="Kerkhoven R."/>
            <person name="De Vries M."/>
            <person name="Ursing B."/>
            <person name="De Vos W.M."/>
            <person name="Siezen R.J."/>
        </authorList>
    </citation>
    <scope>NUCLEOTIDE SEQUENCE [LARGE SCALE GENOMIC DNA]</scope>
    <source>
        <strain>ATCC BAA-793 / NCIMB 8826 / WCFS1</strain>
    </source>
</reference>
<reference key="2">
    <citation type="journal article" date="2012" name="J. Bacteriol.">
        <title>Complete resequencing and reannotation of the Lactobacillus plantarum WCFS1 genome.</title>
        <authorList>
            <person name="Siezen R.J."/>
            <person name="Francke C."/>
            <person name="Renckens B."/>
            <person name="Boekhorst J."/>
            <person name="Wels M."/>
            <person name="Kleerebezem M."/>
            <person name="van Hijum S.A."/>
        </authorList>
    </citation>
    <scope>NUCLEOTIDE SEQUENCE [LARGE SCALE GENOMIC DNA]</scope>
    <scope>GENOME REANNOTATION</scope>
    <source>
        <strain>ATCC BAA-793 / NCIMB 8826 / WCFS1</strain>
    </source>
</reference>
<protein>
    <recommendedName>
        <fullName evidence="1">Energy-coupling factor transporter ATP-binding protein EcfA2</fullName>
        <shortName evidence="1">ECF transporter A component EcfA2</shortName>
        <ecNumber evidence="1">7.-.-.-</ecNumber>
    </recommendedName>
</protein>
<proteinExistence type="inferred from homology"/>
<dbReference type="EC" id="7.-.-.-" evidence="1"/>
<dbReference type="EMBL" id="AL935263">
    <property type="protein sequence ID" value="CCC78480.1"/>
    <property type="molecule type" value="Genomic_DNA"/>
</dbReference>
<dbReference type="RefSeq" id="WP_003641276.1">
    <property type="nucleotide sequence ID" value="NC_004567.2"/>
</dbReference>
<dbReference type="RefSeq" id="YP_004888994.1">
    <property type="nucleotide sequence ID" value="NC_004567.2"/>
</dbReference>
<dbReference type="SMR" id="Q88XV1"/>
<dbReference type="STRING" id="220668.lp_1074"/>
<dbReference type="EnsemblBacteria" id="CCC78480">
    <property type="protein sequence ID" value="CCC78480"/>
    <property type="gene ID" value="lp_1074"/>
</dbReference>
<dbReference type="KEGG" id="lpl:lp_1074"/>
<dbReference type="PATRIC" id="fig|220668.9.peg.909"/>
<dbReference type="eggNOG" id="COG1122">
    <property type="taxonomic scope" value="Bacteria"/>
</dbReference>
<dbReference type="HOGENOM" id="CLU_000604_1_22_9"/>
<dbReference type="OrthoDB" id="9784332at2"/>
<dbReference type="PhylomeDB" id="Q88XV1"/>
<dbReference type="Proteomes" id="UP000000432">
    <property type="component" value="Chromosome"/>
</dbReference>
<dbReference type="GO" id="GO:0043190">
    <property type="term" value="C:ATP-binding cassette (ABC) transporter complex"/>
    <property type="evidence" value="ECO:0007669"/>
    <property type="project" value="TreeGrafter"/>
</dbReference>
<dbReference type="GO" id="GO:0005524">
    <property type="term" value="F:ATP binding"/>
    <property type="evidence" value="ECO:0007669"/>
    <property type="project" value="UniProtKB-KW"/>
</dbReference>
<dbReference type="GO" id="GO:0016887">
    <property type="term" value="F:ATP hydrolysis activity"/>
    <property type="evidence" value="ECO:0007669"/>
    <property type="project" value="InterPro"/>
</dbReference>
<dbReference type="GO" id="GO:0042626">
    <property type="term" value="F:ATPase-coupled transmembrane transporter activity"/>
    <property type="evidence" value="ECO:0007669"/>
    <property type="project" value="TreeGrafter"/>
</dbReference>
<dbReference type="CDD" id="cd03225">
    <property type="entry name" value="ABC_cobalt_CbiO_domain1"/>
    <property type="match status" value="1"/>
</dbReference>
<dbReference type="FunFam" id="3.40.50.300:FF:000224">
    <property type="entry name" value="Energy-coupling factor transporter ATP-binding protein EcfA"/>
    <property type="match status" value="1"/>
</dbReference>
<dbReference type="Gene3D" id="3.40.50.300">
    <property type="entry name" value="P-loop containing nucleotide triphosphate hydrolases"/>
    <property type="match status" value="1"/>
</dbReference>
<dbReference type="InterPro" id="IPR003593">
    <property type="entry name" value="AAA+_ATPase"/>
</dbReference>
<dbReference type="InterPro" id="IPR003439">
    <property type="entry name" value="ABC_transporter-like_ATP-bd"/>
</dbReference>
<dbReference type="InterPro" id="IPR017871">
    <property type="entry name" value="ABC_transporter-like_CS"/>
</dbReference>
<dbReference type="InterPro" id="IPR015856">
    <property type="entry name" value="ABC_transpr_CbiO/EcfA_su"/>
</dbReference>
<dbReference type="InterPro" id="IPR050095">
    <property type="entry name" value="ECF_ABC_transporter_ATP-bd"/>
</dbReference>
<dbReference type="InterPro" id="IPR030946">
    <property type="entry name" value="EcfA2"/>
</dbReference>
<dbReference type="InterPro" id="IPR027417">
    <property type="entry name" value="P-loop_NTPase"/>
</dbReference>
<dbReference type="NCBIfam" id="TIGR04521">
    <property type="entry name" value="ECF_ATPase_2"/>
    <property type="match status" value="1"/>
</dbReference>
<dbReference type="NCBIfam" id="NF010155">
    <property type="entry name" value="PRK13634.1"/>
    <property type="match status" value="1"/>
</dbReference>
<dbReference type="PANTHER" id="PTHR43553:SF27">
    <property type="entry name" value="ENERGY-COUPLING FACTOR TRANSPORTER ATP-BINDING PROTEIN ECFA2"/>
    <property type="match status" value="1"/>
</dbReference>
<dbReference type="PANTHER" id="PTHR43553">
    <property type="entry name" value="HEAVY METAL TRANSPORTER"/>
    <property type="match status" value="1"/>
</dbReference>
<dbReference type="Pfam" id="PF00005">
    <property type="entry name" value="ABC_tran"/>
    <property type="match status" value="1"/>
</dbReference>
<dbReference type="SMART" id="SM00382">
    <property type="entry name" value="AAA"/>
    <property type="match status" value="1"/>
</dbReference>
<dbReference type="SUPFAM" id="SSF52540">
    <property type="entry name" value="P-loop containing nucleoside triphosphate hydrolases"/>
    <property type="match status" value="1"/>
</dbReference>
<dbReference type="PROSITE" id="PS00211">
    <property type="entry name" value="ABC_TRANSPORTER_1"/>
    <property type="match status" value="1"/>
</dbReference>
<dbReference type="PROSITE" id="PS50893">
    <property type="entry name" value="ABC_TRANSPORTER_2"/>
    <property type="match status" value="1"/>
</dbReference>
<dbReference type="PROSITE" id="PS51246">
    <property type="entry name" value="CBIO"/>
    <property type="match status" value="1"/>
</dbReference>